<sequence length="263" mass="28030">MNKQAATEKLVAVDIGNTSVNIGIFEGEQLLANWHLGSVAQRMADEYASLLLGLLQHAGIQAGELNRVIMCSVVPPLTTTFEEVFKTYFKATPLVVGAGIKSGVKIRMDNPREVGADRIVNAAAARVLYPGACIIVDMGTATTFDTLSESGEYIGGAIAPGIATSAQAIVEKTSKLPKIEIIHPAKAIGSNTVSAMQSGVYFGYIGLVEELVRRIQAELGQKARVVATGGYASLIAEGSRIFDIVRSDLTLQGLRFIYQMNKV</sequence>
<reference key="1">
    <citation type="submission" date="2007-05" db="EMBL/GenBank/DDBJ databases">
        <title>Complete sequence of Dehalococcoides sp. BAV1.</title>
        <authorList>
            <consortium name="US DOE Joint Genome Institute"/>
            <person name="Copeland A."/>
            <person name="Lucas S."/>
            <person name="Lapidus A."/>
            <person name="Barry K."/>
            <person name="Detter J.C."/>
            <person name="Glavina del Rio T."/>
            <person name="Hammon N."/>
            <person name="Israni S."/>
            <person name="Pitluck S."/>
            <person name="Lowry S."/>
            <person name="Clum A."/>
            <person name="Schmutz J."/>
            <person name="Larimer F."/>
            <person name="Land M."/>
            <person name="Hauser L."/>
            <person name="Kyrpides N."/>
            <person name="Kim E."/>
            <person name="Ritalahti K.M."/>
            <person name="Loeffler F."/>
            <person name="Richardson P."/>
        </authorList>
    </citation>
    <scope>NUCLEOTIDE SEQUENCE [LARGE SCALE GENOMIC DNA]</scope>
    <source>
        <strain>ATCC BAA-2100 / JCM 16839 / KCTC 5957 / BAV1</strain>
    </source>
</reference>
<accession>A5FS34</accession>
<organism>
    <name type="scientific">Dehalococcoides mccartyi (strain ATCC BAA-2100 / JCM 16839 / KCTC 5957 / BAV1)</name>
    <dbReference type="NCBI Taxonomy" id="216389"/>
    <lineage>
        <taxon>Bacteria</taxon>
        <taxon>Bacillati</taxon>
        <taxon>Chloroflexota</taxon>
        <taxon>Dehalococcoidia</taxon>
        <taxon>Dehalococcoidales</taxon>
        <taxon>Dehalococcoidaceae</taxon>
        <taxon>Dehalococcoides</taxon>
    </lineage>
</organism>
<comment type="function">
    <text evidence="1">Catalyzes the phosphorylation of pantothenate (Pan), the first step in CoA biosynthesis.</text>
</comment>
<comment type="catalytic activity">
    <reaction evidence="1">
        <text>(R)-pantothenate + ATP = (R)-4'-phosphopantothenate + ADP + H(+)</text>
        <dbReference type="Rhea" id="RHEA:16373"/>
        <dbReference type="ChEBI" id="CHEBI:10986"/>
        <dbReference type="ChEBI" id="CHEBI:15378"/>
        <dbReference type="ChEBI" id="CHEBI:29032"/>
        <dbReference type="ChEBI" id="CHEBI:30616"/>
        <dbReference type="ChEBI" id="CHEBI:456216"/>
        <dbReference type="EC" id="2.7.1.33"/>
    </reaction>
</comment>
<comment type="cofactor">
    <cofactor evidence="1">
        <name>NH4(+)</name>
        <dbReference type="ChEBI" id="CHEBI:28938"/>
    </cofactor>
    <cofactor evidence="1">
        <name>K(+)</name>
        <dbReference type="ChEBI" id="CHEBI:29103"/>
    </cofactor>
    <text evidence="1">A monovalent cation. Ammonium or potassium.</text>
</comment>
<comment type="pathway">
    <text evidence="1">Cofactor biosynthesis; coenzyme A biosynthesis; CoA from (R)-pantothenate: step 1/5.</text>
</comment>
<comment type="subunit">
    <text evidence="1">Homodimer.</text>
</comment>
<comment type="subcellular location">
    <subcellularLocation>
        <location evidence="1">Cytoplasm</location>
    </subcellularLocation>
</comment>
<comment type="similarity">
    <text evidence="1">Belongs to the type III pantothenate kinase family.</text>
</comment>
<name>COAX_DEHMB</name>
<dbReference type="EC" id="2.7.1.33" evidence="1"/>
<dbReference type="EMBL" id="CP000688">
    <property type="protein sequence ID" value="ABQ16990.1"/>
    <property type="molecule type" value="Genomic_DNA"/>
</dbReference>
<dbReference type="SMR" id="A5FS34"/>
<dbReference type="KEGG" id="deb:DehaBAV1_0405"/>
<dbReference type="PATRIC" id="fig|216389.18.peg.448"/>
<dbReference type="HOGENOM" id="CLU_066627_1_0_0"/>
<dbReference type="UniPathway" id="UPA00241">
    <property type="reaction ID" value="UER00352"/>
</dbReference>
<dbReference type="GO" id="GO:0005737">
    <property type="term" value="C:cytoplasm"/>
    <property type="evidence" value="ECO:0007669"/>
    <property type="project" value="UniProtKB-SubCell"/>
</dbReference>
<dbReference type="GO" id="GO:0005524">
    <property type="term" value="F:ATP binding"/>
    <property type="evidence" value="ECO:0007669"/>
    <property type="project" value="UniProtKB-UniRule"/>
</dbReference>
<dbReference type="GO" id="GO:0046872">
    <property type="term" value="F:metal ion binding"/>
    <property type="evidence" value="ECO:0007669"/>
    <property type="project" value="UniProtKB-KW"/>
</dbReference>
<dbReference type="GO" id="GO:0004594">
    <property type="term" value="F:pantothenate kinase activity"/>
    <property type="evidence" value="ECO:0007669"/>
    <property type="project" value="UniProtKB-UniRule"/>
</dbReference>
<dbReference type="GO" id="GO:0015937">
    <property type="term" value="P:coenzyme A biosynthetic process"/>
    <property type="evidence" value="ECO:0007669"/>
    <property type="project" value="UniProtKB-UniRule"/>
</dbReference>
<dbReference type="CDD" id="cd24015">
    <property type="entry name" value="ASKHA_NBD_PanK-III"/>
    <property type="match status" value="1"/>
</dbReference>
<dbReference type="Gene3D" id="3.30.420.40">
    <property type="match status" value="2"/>
</dbReference>
<dbReference type="HAMAP" id="MF_01274">
    <property type="entry name" value="Pantothen_kinase_3"/>
    <property type="match status" value="1"/>
</dbReference>
<dbReference type="InterPro" id="IPR043129">
    <property type="entry name" value="ATPase_NBD"/>
</dbReference>
<dbReference type="InterPro" id="IPR004619">
    <property type="entry name" value="Type_III_PanK"/>
</dbReference>
<dbReference type="NCBIfam" id="TIGR00671">
    <property type="entry name" value="baf"/>
    <property type="match status" value="1"/>
</dbReference>
<dbReference type="NCBIfam" id="NF009848">
    <property type="entry name" value="PRK13318.1-6"/>
    <property type="match status" value="1"/>
</dbReference>
<dbReference type="NCBIfam" id="NF009855">
    <property type="entry name" value="PRK13321.1"/>
    <property type="match status" value="1"/>
</dbReference>
<dbReference type="PANTHER" id="PTHR34265">
    <property type="entry name" value="TYPE III PANTOTHENATE KINASE"/>
    <property type="match status" value="1"/>
</dbReference>
<dbReference type="PANTHER" id="PTHR34265:SF1">
    <property type="entry name" value="TYPE III PANTOTHENATE KINASE"/>
    <property type="match status" value="1"/>
</dbReference>
<dbReference type="Pfam" id="PF03309">
    <property type="entry name" value="Pan_kinase"/>
    <property type="match status" value="1"/>
</dbReference>
<dbReference type="SUPFAM" id="SSF53067">
    <property type="entry name" value="Actin-like ATPase domain"/>
    <property type="match status" value="2"/>
</dbReference>
<evidence type="ECO:0000255" key="1">
    <source>
        <dbReference type="HAMAP-Rule" id="MF_01274"/>
    </source>
</evidence>
<gene>
    <name evidence="1" type="primary">coaX</name>
    <name type="ordered locus">DehaBAV1_0405</name>
</gene>
<feature type="chain" id="PRO_1000085851" description="Type III pantothenate kinase">
    <location>
        <begin position="1"/>
        <end position="263"/>
    </location>
</feature>
<feature type="active site" description="Proton acceptor" evidence="1">
    <location>
        <position position="117"/>
    </location>
</feature>
<feature type="binding site" evidence="1">
    <location>
        <begin position="14"/>
        <end position="21"/>
    </location>
    <ligand>
        <name>ATP</name>
        <dbReference type="ChEBI" id="CHEBI:30616"/>
    </ligand>
</feature>
<feature type="binding site" evidence="1">
    <location>
        <begin position="115"/>
        <end position="118"/>
    </location>
    <ligand>
        <name>substrate</name>
    </ligand>
</feature>
<feature type="binding site" evidence="1">
    <location>
        <position position="137"/>
    </location>
    <ligand>
        <name>K(+)</name>
        <dbReference type="ChEBI" id="CHEBI:29103"/>
    </ligand>
</feature>
<feature type="binding site" evidence="1">
    <location>
        <position position="140"/>
    </location>
    <ligand>
        <name>ATP</name>
        <dbReference type="ChEBI" id="CHEBI:30616"/>
    </ligand>
</feature>
<feature type="binding site" evidence="1">
    <location>
        <position position="192"/>
    </location>
    <ligand>
        <name>substrate</name>
    </ligand>
</feature>
<keyword id="KW-0067">ATP-binding</keyword>
<keyword id="KW-0173">Coenzyme A biosynthesis</keyword>
<keyword id="KW-0963">Cytoplasm</keyword>
<keyword id="KW-0418">Kinase</keyword>
<keyword id="KW-0479">Metal-binding</keyword>
<keyword id="KW-0547">Nucleotide-binding</keyword>
<keyword id="KW-0630">Potassium</keyword>
<keyword id="KW-0808">Transferase</keyword>
<proteinExistence type="inferred from homology"/>
<protein>
    <recommendedName>
        <fullName evidence="1">Type III pantothenate kinase</fullName>
        <ecNumber evidence="1">2.7.1.33</ecNumber>
    </recommendedName>
    <alternativeName>
        <fullName evidence="1">PanK-III</fullName>
    </alternativeName>
    <alternativeName>
        <fullName evidence="1">Pantothenic acid kinase</fullName>
    </alternativeName>
</protein>